<accession>F9UN92</accession>
<protein>
    <recommendedName>
        <fullName evidence="1">ADP-dependent (S)-NAD(P)H-hydrate dehydratase</fullName>
        <ecNumber evidence="1">4.2.1.136</ecNumber>
    </recommendedName>
    <alternativeName>
        <fullName evidence="1">ADP-dependent NAD(P)HX dehydratase</fullName>
    </alternativeName>
</protein>
<keyword id="KW-0067">ATP-binding</keyword>
<keyword id="KW-0456">Lyase</keyword>
<keyword id="KW-0520">NAD</keyword>
<keyword id="KW-0521">NADP</keyword>
<keyword id="KW-0547">Nucleotide-binding</keyword>
<keyword id="KW-1185">Reference proteome</keyword>
<reference key="1">
    <citation type="journal article" date="2003" name="Proc. Natl. Acad. Sci. U.S.A.">
        <title>Complete genome sequence of Lactobacillus plantarum WCFS1.</title>
        <authorList>
            <person name="Kleerebezem M."/>
            <person name="Boekhorst J."/>
            <person name="van Kranenburg R."/>
            <person name="Molenaar D."/>
            <person name="Kuipers O.P."/>
            <person name="Leer R."/>
            <person name="Tarchini R."/>
            <person name="Peters S.A."/>
            <person name="Sandbrink H.M."/>
            <person name="Fiers M.W.E.J."/>
            <person name="Stiekema W."/>
            <person name="Klein Lankhorst R.M."/>
            <person name="Bron P.A."/>
            <person name="Hoffer S.M."/>
            <person name="Nierop Groot M.N."/>
            <person name="Kerkhoven R."/>
            <person name="De Vries M."/>
            <person name="Ursing B."/>
            <person name="De Vos W.M."/>
            <person name="Siezen R.J."/>
        </authorList>
    </citation>
    <scope>NUCLEOTIDE SEQUENCE [LARGE SCALE GENOMIC DNA]</scope>
    <source>
        <strain>ATCC BAA-793 / NCIMB 8826 / WCFS1</strain>
    </source>
</reference>
<reference key="2">
    <citation type="journal article" date="2012" name="J. Bacteriol.">
        <title>Complete resequencing and reannotation of the Lactobacillus plantarum WCFS1 genome.</title>
        <authorList>
            <person name="Siezen R.J."/>
            <person name="Francke C."/>
            <person name="Renckens B."/>
            <person name="Boekhorst J."/>
            <person name="Wels M."/>
            <person name="Kleerebezem M."/>
            <person name="van Hijum S.A."/>
        </authorList>
    </citation>
    <scope>NUCLEOTIDE SEQUENCE [LARGE SCALE GENOMIC DNA]</scope>
    <scope>GENOME REANNOTATION</scope>
    <source>
        <strain>ATCC BAA-793 / NCIMB 8826 / WCFS1</strain>
    </source>
</reference>
<evidence type="ECO:0000255" key="1">
    <source>
        <dbReference type="HAMAP-Rule" id="MF_01965"/>
    </source>
</evidence>
<feature type="chain" id="PRO_0000416143" description="ADP-dependent (S)-NAD(P)H-hydrate dehydratase">
    <location>
        <begin position="1"/>
        <end position="278"/>
    </location>
</feature>
<feature type="domain" description="YjeF C-terminal" evidence="1">
    <location>
        <begin position="5"/>
        <end position="272"/>
    </location>
</feature>
<feature type="binding site" evidence="1">
    <location>
        <position position="40"/>
    </location>
    <ligand>
        <name>(6S)-NADPHX</name>
        <dbReference type="ChEBI" id="CHEBI:64076"/>
    </ligand>
</feature>
<feature type="binding site" evidence="1">
    <location>
        <position position="103"/>
    </location>
    <ligand>
        <name>(6S)-NADPHX</name>
        <dbReference type="ChEBI" id="CHEBI:64076"/>
    </ligand>
</feature>
<feature type="binding site" evidence="1">
    <location>
        <position position="152"/>
    </location>
    <ligand>
        <name>(6S)-NADPHX</name>
        <dbReference type="ChEBI" id="CHEBI:64076"/>
    </ligand>
</feature>
<feature type="binding site" evidence="1">
    <location>
        <position position="214"/>
    </location>
    <ligand>
        <name>AMP</name>
        <dbReference type="ChEBI" id="CHEBI:456215"/>
    </ligand>
</feature>
<feature type="binding site" evidence="1">
    <location>
        <position position="215"/>
    </location>
    <ligand>
        <name>(6S)-NADPHX</name>
        <dbReference type="ChEBI" id="CHEBI:64076"/>
    </ligand>
</feature>
<organism>
    <name type="scientific">Lactiplantibacillus plantarum (strain ATCC BAA-793 / NCIMB 8826 / WCFS1)</name>
    <name type="common">Lactobacillus plantarum</name>
    <dbReference type="NCBI Taxonomy" id="220668"/>
    <lineage>
        <taxon>Bacteria</taxon>
        <taxon>Bacillati</taxon>
        <taxon>Bacillota</taxon>
        <taxon>Bacilli</taxon>
        <taxon>Lactobacillales</taxon>
        <taxon>Lactobacillaceae</taxon>
        <taxon>Lactiplantibacillus</taxon>
    </lineage>
</organism>
<comment type="function">
    <text evidence="1">Catalyzes the dehydration of the S-form of NAD(P)HX at the expense of ADP, which is converted to AMP. Together with NAD(P)HX epimerase, which catalyzes the epimerization of the S- and R-forms, the enzyme allows the repair of both epimers of NAD(P)HX, a damaged form of NAD(P)H that is a result of enzymatic or heat-dependent hydration.</text>
</comment>
<comment type="catalytic activity">
    <reaction evidence="1">
        <text>(6S)-NADHX + ADP = AMP + phosphate + NADH + H(+)</text>
        <dbReference type="Rhea" id="RHEA:32223"/>
        <dbReference type="ChEBI" id="CHEBI:15378"/>
        <dbReference type="ChEBI" id="CHEBI:43474"/>
        <dbReference type="ChEBI" id="CHEBI:57945"/>
        <dbReference type="ChEBI" id="CHEBI:64074"/>
        <dbReference type="ChEBI" id="CHEBI:456215"/>
        <dbReference type="ChEBI" id="CHEBI:456216"/>
        <dbReference type="EC" id="4.2.1.136"/>
    </reaction>
</comment>
<comment type="catalytic activity">
    <reaction evidence="1">
        <text>(6S)-NADPHX + ADP = AMP + phosphate + NADPH + H(+)</text>
        <dbReference type="Rhea" id="RHEA:32235"/>
        <dbReference type="ChEBI" id="CHEBI:15378"/>
        <dbReference type="ChEBI" id="CHEBI:43474"/>
        <dbReference type="ChEBI" id="CHEBI:57783"/>
        <dbReference type="ChEBI" id="CHEBI:64076"/>
        <dbReference type="ChEBI" id="CHEBI:456215"/>
        <dbReference type="ChEBI" id="CHEBI:456216"/>
        <dbReference type="EC" id="4.2.1.136"/>
    </reaction>
</comment>
<comment type="cofactor">
    <cofactor evidence="1">
        <name>Mg(2+)</name>
        <dbReference type="ChEBI" id="CHEBI:18420"/>
    </cofactor>
</comment>
<comment type="subunit">
    <text evidence="1">Homotetramer.</text>
</comment>
<comment type="similarity">
    <text evidence="1">Belongs to the NnrD/CARKD family.</text>
</comment>
<name>NNRD_LACPL</name>
<sequence length="278" mass="29787">MQPITTEIVSRTIIKRPADSHKGNYGRIMLIGGNQNFGGAIIMAATAATYSGAGLVTVATDPSNFTSLHARLPEAMVIDYHQTDTLLNLLAGMDVIVIGPGLGTDTVADQLLTAVLAATHVPQRLVIDGSALTLLAQQARPLPATDIVVTPHQMEWQRLSGIAIKDQTPTANHDAQQRLGVMAVVKAHRTTVYTDERVWFNPGGTPAMATGGMGDTLAGMIGGFVSQFHNFTDAVLSAVYLHSAIADDLAATRYVVLPHQISTRIPTYMHRFSQIERP</sequence>
<proteinExistence type="inferred from homology"/>
<dbReference type="EC" id="4.2.1.136" evidence="1"/>
<dbReference type="EMBL" id="AL935263">
    <property type="protein sequence ID" value="CCC78681.1"/>
    <property type="molecule type" value="Genomic_DNA"/>
</dbReference>
<dbReference type="RefSeq" id="WP_011101353.1">
    <property type="nucleotide sequence ID" value="NC_004567.2"/>
</dbReference>
<dbReference type="RefSeq" id="YP_004889195.1">
    <property type="nucleotide sequence ID" value="NC_004567.2"/>
</dbReference>
<dbReference type="SMR" id="F9UN92"/>
<dbReference type="STRING" id="220668.lp_1320"/>
<dbReference type="EnsemblBacteria" id="CCC78681">
    <property type="protein sequence ID" value="CCC78681"/>
    <property type="gene ID" value="lp_1320"/>
</dbReference>
<dbReference type="KEGG" id="lpl:lp_1320"/>
<dbReference type="PATRIC" id="fig|220668.9.peg.1113"/>
<dbReference type="eggNOG" id="COG0063">
    <property type="taxonomic scope" value="Bacteria"/>
</dbReference>
<dbReference type="HOGENOM" id="CLU_024853_2_1_9"/>
<dbReference type="OrthoDB" id="9806925at2"/>
<dbReference type="PhylomeDB" id="F9UN92"/>
<dbReference type="Proteomes" id="UP000000432">
    <property type="component" value="Chromosome"/>
</dbReference>
<dbReference type="GO" id="GO:0052855">
    <property type="term" value="F:ADP-dependent NAD(P)H-hydrate dehydratase activity"/>
    <property type="evidence" value="ECO:0007669"/>
    <property type="project" value="UniProtKB-UniRule"/>
</dbReference>
<dbReference type="GO" id="GO:0005524">
    <property type="term" value="F:ATP binding"/>
    <property type="evidence" value="ECO:0007669"/>
    <property type="project" value="UniProtKB-KW"/>
</dbReference>
<dbReference type="GO" id="GO:0052856">
    <property type="term" value="F:NAD(P)HX epimerase activity"/>
    <property type="evidence" value="ECO:0007669"/>
    <property type="project" value="TreeGrafter"/>
</dbReference>
<dbReference type="GO" id="GO:0110051">
    <property type="term" value="P:metabolite repair"/>
    <property type="evidence" value="ECO:0007669"/>
    <property type="project" value="TreeGrafter"/>
</dbReference>
<dbReference type="GO" id="GO:0046496">
    <property type="term" value="P:nicotinamide nucleotide metabolic process"/>
    <property type="evidence" value="ECO:0007669"/>
    <property type="project" value="UniProtKB-UniRule"/>
</dbReference>
<dbReference type="CDD" id="cd01171">
    <property type="entry name" value="YXKO-related"/>
    <property type="match status" value="1"/>
</dbReference>
<dbReference type="Gene3D" id="3.40.1190.20">
    <property type="match status" value="1"/>
</dbReference>
<dbReference type="HAMAP" id="MF_01965">
    <property type="entry name" value="NADHX_dehydratase"/>
    <property type="match status" value="1"/>
</dbReference>
<dbReference type="InterPro" id="IPR017953">
    <property type="entry name" value="Carbohydrate_kinase_pred_CS"/>
</dbReference>
<dbReference type="InterPro" id="IPR000631">
    <property type="entry name" value="CARKD"/>
</dbReference>
<dbReference type="InterPro" id="IPR029056">
    <property type="entry name" value="Ribokinase-like"/>
</dbReference>
<dbReference type="NCBIfam" id="TIGR00196">
    <property type="entry name" value="yjeF_cterm"/>
    <property type="match status" value="1"/>
</dbReference>
<dbReference type="PANTHER" id="PTHR12592:SF0">
    <property type="entry name" value="ATP-DEPENDENT (S)-NAD(P)H-HYDRATE DEHYDRATASE"/>
    <property type="match status" value="1"/>
</dbReference>
<dbReference type="PANTHER" id="PTHR12592">
    <property type="entry name" value="ATP-DEPENDENT (S)-NAD(P)H-HYDRATE DEHYDRATASE FAMILY MEMBER"/>
    <property type="match status" value="1"/>
</dbReference>
<dbReference type="Pfam" id="PF01256">
    <property type="entry name" value="Carb_kinase"/>
    <property type="match status" value="1"/>
</dbReference>
<dbReference type="SUPFAM" id="SSF53613">
    <property type="entry name" value="Ribokinase-like"/>
    <property type="match status" value="1"/>
</dbReference>
<dbReference type="PROSITE" id="PS01049">
    <property type="entry name" value="YJEF_C_1"/>
    <property type="match status" value="1"/>
</dbReference>
<dbReference type="PROSITE" id="PS01050">
    <property type="entry name" value="YJEF_C_2"/>
    <property type="match status" value="1"/>
</dbReference>
<dbReference type="PROSITE" id="PS51383">
    <property type="entry name" value="YJEF_C_3"/>
    <property type="match status" value="1"/>
</dbReference>
<gene>
    <name evidence="1" type="primary">nnrD</name>
    <name type="ordered locus">lp_1320</name>
</gene>